<evidence type="ECO:0000255" key="1">
    <source>
        <dbReference type="HAMAP-Rule" id="MF_02049"/>
    </source>
</evidence>
<evidence type="ECO:0000269" key="2">
    <source>
    </source>
</evidence>
<evidence type="ECO:0000269" key="3">
    <source>
    </source>
</evidence>
<evidence type="ECO:0000269" key="4">
    <source>
    </source>
</evidence>
<evidence type="ECO:0000269" key="5">
    <source>
    </source>
</evidence>
<evidence type="ECO:0000269" key="6">
    <source>
    </source>
</evidence>
<evidence type="ECO:0000269" key="7">
    <source>
    </source>
</evidence>
<evidence type="ECO:0000269" key="8">
    <source>
    </source>
</evidence>
<evidence type="ECO:0000303" key="9">
    <source>
    </source>
</evidence>
<evidence type="ECO:0000305" key="10"/>
<evidence type="ECO:0000305" key="11">
    <source>
    </source>
</evidence>
<evidence type="ECO:0007744" key="12">
    <source>
        <dbReference type="PDB" id="7DL9"/>
    </source>
</evidence>
<evidence type="ECO:0007744" key="13">
    <source>
        <dbReference type="PDB" id="7DLA"/>
    </source>
</evidence>
<evidence type="ECO:0007829" key="14">
    <source>
        <dbReference type="PDB" id="7DL9"/>
    </source>
</evidence>
<evidence type="ECO:0007829" key="15">
    <source>
        <dbReference type="PDB" id="7DLA"/>
    </source>
</evidence>
<accession>P0AFF4</accession>
<accession>P09452</accession>
<accession>P76653</accession>
<accession>Q2M9M9</accession>
<keyword id="KW-0002">3D-structure</keyword>
<keyword id="KW-0997">Cell inner membrane</keyword>
<keyword id="KW-1003">Cell membrane</keyword>
<keyword id="KW-0903">Direct protein sequencing</keyword>
<keyword id="KW-0472">Membrane</keyword>
<keyword id="KW-1185">Reference proteome</keyword>
<keyword id="KW-0769">Symport</keyword>
<keyword id="KW-0812">Transmembrane</keyword>
<keyword id="KW-1133">Transmembrane helix</keyword>
<keyword id="KW-0813">Transport</keyword>
<proteinExistence type="evidence at protein level"/>
<reference key="1">
    <citation type="journal article" date="1987" name="Eur. J. Biochem.">
        <title>Studies on the sequence and structure of the Escherichia coli K-12 nupG gene, encoding a nucleoside-transport system.</title>
        <authorList>
            <person name="Westh Hansen S.E."/>
            <person name="Jensen N."/>
            <person name="Munch-Petersen A."/>
        </authorList>
    </citation>
    <scope>NUCLEOTIDE SEQUENCE [GENOMIC DNA]</scope>
    <scope>FUNCTION</scope>
    <scope>SUBCELLULAR LOCATION</scope>
    <scope>INDUCTION</scope>
    <source>
        <strain>K12</strain>
    </source>
</reference>
<reference key="2">
    <citation type="journal article" date="1997" name="Science">
        <title>The complete genome sequence of Escherichia coli K-12.</title>
        <authorList>
            <person name="Blattner F.R."/>
            <person name="Plunkett G. III"/>
            <person name="Bloch C.A."/>
            <person name="Perna N.T."/>
            <person name="Burland V."/>
            <person name="Riley M."/>
            <person name="Collado-Vides J."/>
            <person name="Glasner J.D."/>
            <person name="Rode C.K."/>
            <person name="Mayhew G.F."/>
            <person name="Gregor J."/>
            <person name="Davis N.W."/>
            <person name="Kirkpatrick H.A."/>
            <person name="Goeden M.A."/>
            <person name="Rose D.J."/>
            <person name="Mau B."/>
            <person name="Shao Y."/>
        </authorList>
    </citation>
    <scope>NUCLEOTIDE SEQUENCE [LARGE SCALE GENOMIC DNA]</scope>
    <source>
        <strain>K12 / MG1655 / ATCC 47076</strain>
    </source>
</reference>
<reference key="3">
    <citation type="journal article" date="2006" name="Mol. Syst. Biol.">
        <title>Highly accurate genome sequences of Escherichia coli K-12 strains MG1655 and W3110.</title>
        <authorList>
            <person name="Hayashi K."/>
            <person name="Morooka N."/>
            <person name="Yamamoto Y."/>
            <person name="Fujita K."/>
            <person name="Isono K."/>
            <person name="Choi S."/>
            <person name="Ohtsubo E."/>
            <person name="Baba T."/>
            <person name="Wanner B.L."/>
            <person name="Mori H."/>
            <person name="Horiuchi T."/>
        </authorList>
    </citation>
    <scope>NUCLEOTIDE SEQUENCE [LARGE SCALE GENOMIC DNA]</scope>
    <source>
        <strain>K12 / W3110 / ATCC 27325 / DSM 5911</strain>
    </source>
</reference>
<reference key="4">
    <citation type="journal article" date="2004" name="Mol. Membr. Biol.">
        <title>Purification and properties of the Escherichia coli nucleoside transporter NupG, a paradigm for a major facilitator transporter sub-family.</title>
        <authorList>
            <person name="Xie H."/>
            <person name="Patching S.G."/>
            <person name="Gallagher M.P."/>
            <person name="Litherland G.J."/>
            <person name="Brough A.R."/>
            <person name="Venter H."/>
            <person name="Yao S.Y."/>
            <person name="Ng A.M."/>
            <person name="Young J.D."/>
            <person name="Herbert R.B."/>
            <person name="Henderson P.J."/>
            <person name="Baldwin S.A."/>
        </authorList>
    </citation>
    <scope>PROTEIN SEQUENCE OF 1-10</scope>
    <scope>FUNCTION</scope>
    <scope>CATALYTIC ACTIVITY</scope>
    <scope>ACTIVITY REGULATION</scope>
    <scope>BIOPHYSICOCHEMICAL PROPERTIES</scope>
    <scope>SUBCELLULAR LOCATION</scope>
</reference>
<reference key="5">
    <citation type="journal article" date="1979" name="J. Biol. Chem.">
        <title>Nucleoside transport in cells and membrane vesicles from Escherichia coli K12.</title>
        <authorList>
            <person name="Munch-Petersen A."/>
            <person name="Mygind B."/>
            <person name="Nicolaisen A."/>
            <person name="Pihl N.J."/>
        </authorList>
    </citation>
    <scope>FUNCTION</scope>
    <scope>CATALYTIC ACTIVITY</scope>
    <scope>ACTIVITY REGULATION</scope>
</reference>
<reference key="6">
    <citation type="journal article" date="2001" name="J. Bacteriol.">
        <title>Specificity and topology of the Escherichia coli xanthosine permease, a representative of the NHS subfamily of the major facilitator superfamily.</title>
        <authorList>
            <person name="Noerholm M.H."/>
            <person name="Dandanell G."/>
        </authorList>
    </citation>
    <scope>FUNCTION</scope>
</reference>
<reference key="7">
    <citation type="journal article" date="2005" name="Org. Biomol. Chem.">
        <title>The nucleoside transport proteins, NupC and NupG, from Escherichia coli: specific structural motifs necessary for the binding of ligands.</title>
        <authorList>
            <person name="Patching S.G."/>
            <person name="Baldwin S.A."/>
            <person name="Baldwin A.D."/>
            <person name="Young J.D."/>
            <person name="Gallagher M.P."/>
            <person name="Henderson P.J."/>
            <person name="Herbert R.B."/>
        </authorList>
    </citation>
    <scope>FUNCTION</scope>
</reference>
<reference key="8">
    <citation type="journal article" date="2005" name="Science">
        <title>Global topology analysis of the Escherichia coli inner membrane proteome.</title>
        <authorList>
            <person name="Daley D.O."/>
            <person name="Rapp M."/>
            <person name="Granseth E."/>
            <person name="Melen K."/>
            <person name="Drew D."/>
            <person name="von Heijne G."/>
        </authorList>
    </citation>
    <scope>TOPOLOGY [LARGE SCALE ANALYSIS]</scope>
    <scope>SUBCELLULAR LOCATION</scope>
    <source>
        <strain>K12 / MG1655 / ATCC 47076</strain>
    </source>
</reference>
<reference evidence="12 13" key="9">
    <citation type="journal article" date="2021" name="J. Biol. Chem.">
        <title>Molecular basis for substrate recognition by the bacterial nucleoside transporter NupG.</title>
        <authorList>
            <person name="Wang C."/>
            <person name="Xiao Q."/>
            <person name="Duan H."/>
            <person name="Li J."/>
            <person name="Zhang J."/>
            <person name="Wang Q."/>
            <person name="Guo L."/>
            <person name="Hu J."/>
            <person name="Sun B."/>
            <person name="Deng D."/>
        </authorList>
    </citation>
    <scope>X-RAY CRYSTALLOGRAPHY (3.00 ANGSTROMS) OF WILD-TYPE AND MUTANT ALA-323</scope>
    <scope>SUBCELLULAR LOCATION</scope>
    <scope>TOPOLOGY</scope>
    <scope>MUTAGENESIS OF ARG-136; THR-140; PHE-143; GLN-225; ASN-228; GLN-261; GLU-264; TYR-318; PHE-322 AND ASP-323</scope>
    <source>
        <strain>K12masn</strain>
    </source>
</reference>
<dbReference type="EMBL" id="X06174">
    <property type="protein sequence ID" value="CAA29541.1"/>
    <property type="molecule type" value="Genomic_DNA"/>
</dbReference>
<dbReference type="EMBL" id="U28377">
    <property type="protein sequence ID" value="AAA69132.1"/>
    <property type="status" value="ALT_INIT"/>
    <property type="molecule type" value="Genomic_DNA"/>
</dbReference>
<dbReference type="EMBL" id="U00096">
    <property type="protein sequence ID" value="AAC76001.2"/>
    <property type="molecule type" value="Genomic_DNA"/>
</dbReference>
<dbReference type="EMBL" id="AP009048">
    <property type="protein sequence ID" value="BAE77027.1"/>
    <property type="molecule type" value="Genomic_DNA"/>
</dbReference>
<dbReference type="RefSeq" id="NP_417439.4">
    <property type="nucleotide sequence ID" value="NC_000913.3"/>
</dbReference>
<dbReference type="RefSeq" id="WP_001049791.1">
    <property type="nucleotide sequence ID" value="NZ_STEB01000001.1"/>
</dbReference>
<dbReference type="PDB" id="7DL9">
    <property type="method" value="X-ray"/>
    <property type="resolution" value="3.00 A"/>
    <property type="chains" value="A/B=1-418"/>
</dbReference>
<dbReference type="PDB" id="7DLA">
    <property type="method" value="X-ray"/>
    <property type="resolution" value="3.00 A"/>
    <property type="chains" value="A=1-418"/>
</dbReference>
<dbReference type="PDBsum" id="7DL9"/>
<dbReference type="PDBsum" id="7DLA"/>
<dbReference type="SMR" id="P0AFF4"/>
<dbReference type="BioGRID" id="4262362">
    <property type="interactions" value="113"/>
</dbReference>
<dbReference type="FunCoup" id="P0AFF4">
    <property type="interactions" value="28"/>
</dbReference>
<dbReference type="IntAct" id="P0AFF4">
    <property type="interactions" value="1"/>
</dbReference>
<dbReference type="STRING" id="511145.b2964"/>
<dbReference type="TCDB" id="2.A.1.10.1">
    <property type="family name" value="the major facilitator superfamily (mfs)"/>
</dbReference>
<dbReference type="jPOST" id="P0AFF4"/>
<dbReference type="PaxDb" id="511145-b2964"/>
<dbReference type="EnsemblBacteria" id="AAC76001">
    <property type="protein sequence ID" value="AAC76001"/>
    <property type="gene ID" value="b2964"/>
</dbReference>
<dbReference type="GeneID" id="93779027"/>
<dbReference type="GeneID" id="946282"/>
<dbReference type="KEGG" id="ecj:JW2932"/>
<dbReference type="KEGG" id="eco:b2964"/>
<dbReference type="KEGG" id="ecoc:C3026_16220"/>
<dbReference type="PATRIC" id="fig|1411691.4.peg.3766"/>
<dbReference type="EchoBASE" id="EB0658"/>
<dbReference type="eggNOG" id="COG2211">
    <property type="taxonomic scope" value="Bacteria"/>
</dbReference>
<dbReference type="HOGENOM" id="CLU_013133_1_2_6"/>
<dbReference type="InParanoid" id="P0AFF4"/>
<dbReference type="OMA" id="YAICHLV"/>
<dbReference type="OrthoDB" id="9783013at2"/>
<dbReference type="PhylomeDB" id="P0AFF4"/>
<dbReference type="BioCyc" id="EcoCyc:NUPG-MONOMER"/>
<dbReference type="BioCyc" id="MetaCyc:NUPG-MONOMER"/>
<dbReference type="SABIO-RK" id="P0AFF4"/>
<dbReference type="PRO" id="PR:P0AFF4"/>
<dbReference type="Proteomes" id="UP000000625">
    <property type="component" value="Chromosome"/>
</dbReference>
<dbReference type="GO" id="GO:0005886">
    <property type="term" value="C:plasma membrane"/>
    <property type="evidence" value="ECO:0000314"/>
    <property type="project" value="EcoCyc"/>
</dbReference>
<dbReference type="GO" id="GO:0015212">
    <property type="term" value="F:cytidine transmembrane transporter activity"/>
    <property type="evidence" value="ECO:0000315"/>
    <property type="project" value="EcoliWiki"/>
</dbReference>
<dbReference type="GO" id="GO:0015506">
    <property type="term" value="F:nucleoside:proton symporter activity"/>
    <property type="evidence" value="ECO:0000314"/>
    <property type="project" value="EcoCyc"/>
</dbReference>
<dbReference type="GO" id="GO:0015214">
    <property type="term" value="F:pyrimidine nucleoside transmembrane transporter activity"/>
    <property type="evidence" value="ECO:0000314"/>
    <property type="project" value="EcoliWiki"/>
</dbReference>
<dbReference type="GO" id="GO:0015213">
    <property type="term" value="F:uridine transmembrane transporter activity"/>
    <property type="evidence" value="ECO:0000314"/>
    <property type="project" value="EcoliWiki"/>
</dbReference>
<dbReference type="GO" id="GO:0032238">
    <property type="term" value="P:adenosine transport"/>
    <property type="evidence" value="ECO:0000315"/>
    <property type="project" value="EcoliWiki"/>
</dbReference>
<dbReference type="GO" id="GO:1901642">
    <property type="term" value="P:nucleoside transmembrane transport"/>
    <property type="evidence" value="ECO:0000314"/>
    <property type="project" value="EcoCyc"/>
</dbReference>
<dbReference type="GO" id="GO:0015860">
    <property type="term" value="P:purine nucleoside transmembrane transport"/>
    <property type="evidence" value="ECO:0000315"/>
    <property type="project" value="EcoliWiki"/>
</dbReference>
<dbReference type="GO" id="GO:0015864">
    <property type="term" value="P:pyrimidine nucleoside transport"/>
    <property type="evidence" value="ECO:0000314"/>
    <property type="project" value="EcoliWiki"/>
</dbReference>
<dbReference type="GO" id="GO:0015862">
    <property type="term" value="P:uridine transmembrane transport"/>
    <property type="evidence" value="ECO:0000314"/>
    <property type="project" value="EcoliWiki"/>
</dbReference>
<dbReference type="CDD" id="cd06177">
    <property type="entry name" value="MFS_NHS"/>
    <property type="match status" value="1"/>
</dbReference>
<dbReference type="FunFam" id="1.20.1250.20:FF:000012">
    <property type="entry name" value="Nucleoside permease NupG"/>
    <property type="match status" value="1"/>
</dbReference>
<dbReference type="FunFam" id="1.20.1250.20:FF:000015">
    <property type="entry name" value="Nucleoside permease NupG"/>
    <property type="match status" value="1"/>
</dbReference>
<dbReference type="Gene3D" id="1.20.1250.20">
    <property type="entry name" value="MFS general substrate transporter like domains"/>
    <property type="match status" value="2"/>
</dbReference>
<dbReference type="HAMAP" id="MF_02049">
    <property type="entry name" value="NupG"/>
    <property type="match status" value="1"/>
</dbReference>
<dbReference type="InterPro" id="IPR020846">
    <property type="entry name" value="MFS_dom"/>
</dbReference>
<dbReference type="InterPro" id="IPR036259">
    <property type="entry name" value="MFS_trans_sf"/>
</dbReference>
<dbReference type="InterPro" id="IPR004740">
    <property type="entry name" value="Nuc_H_symport"/>
</dbReference>
<dbReference type="InterPro" id="IPR033667">
    <property type="entry name" value="NupG"/>
</dbReference>
<dbReference type="NCBIfam" id="TIGR00889">
    <property type="entry name" value="2A0110"/>
    <property type="match status" value="1"/>
</dbReference>
<dbReference type="PANTHER" id="PTHR23522">
    <property type="entry name" value="BLL5896 PROTEIN"/>
    <property type="match status" value="1"/>
</dbReference>
<dbReference type="PANTHER" id="PTHR23522:SF4">
    <property type="entry name" value="NUCLEOSIDE PERMEASE NUPG-RELATED"/>
    <property type="match status" value="1"/>
</dbReference>
<dbReference type="Pfam" id="PF03825">
    <property type="entry name" value="Nuc_H_symport"/>
    <property type="match status" value="1"/>
</dbReference>
<dbReference type="SUPFAM" id="SSF103473">
    <property type="entry name" value="MFS general substrate transporter"/>
    <property type="match status" value="1"/>
</dbReference>
<dbReference type="PROSITE" id="PS50850">
    <property type="entry name" value="MFS"/>
    <property type="match status" value="1"/>
</dbReference>
<name>NUPG_ECOLI</name>
<gene>
    <name evidence="1 9" type="primary">nupG</name>
    <name type="ordered locus">b2964</name>
    <name type="ordered locus">JW2932</name>
</gene>
<protein>
    <recommendedName>
        <fullName evidence="1 10">Nucleoside permease NupG</fullName>
    </recommendedName>
    <alternativeName>
        <fullName evidence="10">Nucleoside-transport system protein NupG</fullName>
    </alternativeName>
</protein>
<sequence length="418" mass="46389">MNLKLQLKILSFLQFCLWGSWLTTLGSYMFVTLKFDGASIGAVYSSLGIAAVFMPALLGIVADKWLSAKWVYAICHTIGAITLFMAAQVTTPEAMFLVILINSFAYMPTLGLINTISYYRLQNAGMDIVTDFPPIRIWGTIGFIMAMWVVSLSGFELSHMQLYIGAALSAILVLFTLTLPHIPVAKQQANQSWTTLLGLDAFALFKNKRMAIFFIFSMLLGAELQITNMFGNTFLHSFDKDPMFASSFIVQHASIIMSISQISETLFILTIPFFLSRYGIKNVMMISIVAWILRFALFAYGDPTPFGTVLLVLSMIVYGCAFDFFNISGSVFVEKEVSPAIRASAQGMFLMMTNGFGCILGGIVSGKVVEMYTQNGITDWQTVWLIFAGYSVVLAFAFMAMFKYKHVRVPTGTQTVSH</sequence>
<organism>
    <name type="scientific">Escherichia coli (strain K12)</name>
    <dbReference type="NCBI Taxonomy" id="83333"/>
    <lineage>
        <taxon>Bacteria</taxon>
        <taxon>Pseudomonadati</taxon>
        <taxon>Pseudomonadota</taxon>
        <taxon>Gammaproteobacteria</taxon>
        <taxon>Enterobacterales</taxon>
        <taxon>Enterobacteriaceae</taxon>
        <taxon>Escherichia</taxon>
    </lineage>
</organism>
<feature type="chain" id="PRO_0000058005" description="Nucleoside permease NupG">
    <location>
        <begin position="1"/>
        <end position="418"/>
    </location>
</feature>
<feature type="topological domain" description="Cytoplasmic" evidence="7 12">
    <location>
        <begin position="1"/>
        <end position="4"/>
    </location>
</feature>
<feature type="transmembrane region" description="Helical" evidence="7 12">
    <location>
        <begin position="5"/>
        <end position="29"/>
    </location>
</feature>
<feature type="topological domain" description="Periplasmic" evidence="7 12">
    <location>
        <begin position="30"/>
        <end position="36"/>
    </location>
</feature>
<feature type="transmembrane region" description="Helical" evidence="7 12">
    <location>
        <begin position="37"/>
        <end position="58"/>
    </location>
</feature>
<feature type="topological domain" description="Cytoplasmic" evidence="7 12">
    <location>
        <begin position="59"/>
        <end position="67"/>
    </location>
</feature>
<feature type="transmembrane region" description="Helical" evidence="7 12">
    <location>
        <begin position="68"/>
        <end position="88"/>
    </location>
</feature>
<feature type="topological domain" description="Periplasmic" evidence="7 12">
    <location>
        <begin position="89"/>
        <end position="91"/>
    </location>
</feature>
<feature type="transmembrane region" description="Helical" evidence="7 12">
    <location>
        <begin position="92"/>
        <end position="113"/>
    </location>
</feature>
<feature type="topological domain" description="Cytoplasmic" evidence="7 12">
    <location>
        <begin position="114"/>
        <end position="135"/>
    </location>
</feature>
<feature type="transmembrane region" description="Helical" evidence="7 12">
    <location>
        <begin position="136"/>
        <end position="156"/>
    </location>
</feature>
<feature type="topological domain" description="Periplasmic" evidence="7 12">
    <location>
        <begin position="157"/>
        <end position="158"/>
    </location>
</feature>
<feature type="transmembrane region" description="Helical" evidence="7 12">
    <location>
        <begin position="159"/>
        <end position="178"/>
    </location>
</feature>
<feature type="topological domain" description="Cytoplasmic" evidence="7 12">
    <location>
        <begin position="179"/>
        <end position="209"/>
    </location>
</feature>
<feature type="transmembrane region" description="Helical" evidence="7 12">
    <location>
        <begin position="210"/>
        <end position="236"/>
    </location>
</feature>
<feature type="topological domain" description="Periplasmic" evidence="7 12">
    <location>
        <begin position="237"/>
        <end position="247"/>
    </location>
</feature>
<feature type="transmembrane region" description="Helical" evidence="7 12">
    <location>
        <begin position="248"/>
        <end position="268"/>
    </location>
</feature>
<feature type="topological domain" description="Cytoplasmic" evidence="7 12">
    <location>
        <begin position="269"/>
        <end position="280"/>
    </location>
</feature>
<feature type="transmembrane region" description="Helical" evidence="7 12">
    <location>
        <begin position="281"/>
        <end position="300"/>
    </location>
</feature>
<feature type="topological domain" description="Periplasmic" evidence="7 12">
    <location>
        <begin position="301"/>
        <end position="305"/>
    </location>
</feature>
<feature type="transmembrane region" description="Helical" evidence="7 12">
    <location>
        <begin position="306"/>
        <end position="326"/>
    </location>
</feature>
<feature type="topological domain" description="Cytoplasmic" evidence="7 12">
    <location>
        <begin position="327"/>
        <end position="346"/>
    </location>
</feature>
<feature type="transmembrane region" description="Helical" evidence="7 12">
    <location>
        <begin position="347"/>
        <end position="369"/>
    </location>
</feature>
<feature type="topological domain" description="Periplasmic" evidence="7 12">
    <location>
        <begin position="370"/>
        <end position="379"/>
    </location>
</feature>
<feature type="transmembrane region" description="Helical" evidence="7 12">
    <location>
        <begin position="380"/>
        <end position="403"/>
    </location>
</feature>
<feature type="topological domain" description="Cytoplasmic" evidence="5 7 12">
    <location>
        <begin position="404"/>
        <end position="418"/>
    </location>
</feature>
<feature type="mutagenesis site" description="Abolishes the binding affinity for uridine." evidence="7">
    <original>R</original>
    <variation>A</variation>
    <location>
        <position position="136"/>
    </location>
</feature>
<feature type="mutagenesis site" description="Abolishes the binding affinity for uridine." evidence="7">
    <original>T</original>
    <variation>A</variation>
    <location>
        <position position="140"/>
    </location>
</feature>
<feature type="mutagenesis site" description="Abolishes the binding affinity for uridine." evidence="7">
    <original>F</original>
    <variation>A</variation>
    <location>
        <position position="143"/>
    </location>
</feature>
<feature type="mutagenesis site" description="No change in the binding affinity for uridine." evidence="7">
    <original>Q</original>
    <variation>A</variation>
    <location>
        <position position="225"/>
    </location>
</feature>
<feature type="mutagenesis site" description="Abolishes the binding affinity for uridine." evidence="7">
    <original>N</original>
    <variation>A</variation>
    <location>
        <position position="228"/>
    </location>
</feature>
<feature type="mutagenesis site" description="Abolishes the binding affinity for uridine." evidence="7">
    <original>Q</original>
    <variation>A</variation>
    <location>
        <position position="261"/>
    </location>
</feature>
<feature type="mutagenesis site" description="Abolishes the binding affinity for uridine." evidence="7">
    <original>E</original>
    <variation>A</variation>
    <location>
        <position position="264"/>
    </location>
</feature>
<feature type="mutagenesis site" description="Abolishes the binding affinity for uridine." evidence="7">
    <original>Y</original>
    <variation>A</variation>
    <location>
        <position position="318"/>
    </location>
</feature>
<feature type="mutagenesis site" description="Abolishes the binding affinity for uridine." evidence="7">
    <original>F</original>
    <variation>A</variation>
    <location>
        <position position="322"/>
    </location>
</feature>
<feature type="mutagenesis site" description="20-fold increase in the binding affinity for uridine." evidence="7">
    <original>D</original>
    <variation>A</variation>
    <location>
        <position position="323"/>
    </location>
</feature>
<feature type="sequence conflict" description="In Ref. 4; AA sequence." evidence="10" ref="4">
    <original>L</original>
    <variation>S</variation>
    <location>
        <position position="3"/>
    </location>
</feature>
<feature type="helix" evidence="14">
    <location>
        <begin position="3"/>
        <end position="16"/>
    </location>
</feature>
<feature type="helix" evidence="14">
    <location>
        <begin position="18"/>
        <end position="20"/>
    </location>
</feature>
<feature type="turn" evidence="14">
    <location>
        <begin position="21"/>
        <end position="24"/>
    </location>
</feature>
<feature type="helix" evidence="14">
    <location>
        <begin position="25"/>
        <end position="31"/>
    </location>
</feature>
<feature type="helix" evidence="14">
    <location>
        <begin position="37"/>
        <end position="64"/>
    </location>
</feature>
<feature type="helix" evidence="14">
    <location>
        <begin position="68"/>
        <end position="86"/>
    </location>
</feature>
<feature type="helix" evidence="14">
    <location>
        <begin position="92"/>
        <end position="106"/>
    </location>
</feature>
<feature type="helix" evidence="14">
    <location>
        <begin position="109"/>
        <end position="123"/>
    </location>
</feature>
<feature type="helix" evidence="14">
    <location>
        <begin position="128"/>
        <end position="153"/>
    </location>
</feature>
<feature type="strand" evidence="15">
    <location>
        <begin position="156"/>
        <end position="158"/>
    </location>
</feature>
<feature type="helix" evidence="14">
    <location>
        <begin position="160"/>
        <end position="177"/>
    </location>
</feature>
<feature type="helix" evidence="14">
    <location>
        <begin position="184"/>
        <end position="187"/>
    </location>
</feature>
<feature type="strand" evidence="15">
    <location>
        <begin position="188"/>
        <end position="190"/>
    </location>
</feature>
<feature type="helix" evidence="14">
    <location>
        <begin position="193"/>
        <end position="196"/>
    </location>
</feature>
<feature type="helix" evidence="14">
    <location>
        <begin position="201"/>
        <end position="206"/>
    </location>
</feature>
<feature type="helix" evidence="14">
    <location>
        <begin position="208"/>
        <end position="221"/>
    </location>
</feature>
<feature type="turn" evidence="14">
    <location>
        <begin position="222"/>
        <end position="225"/>
    </location>
</feature>
<feature type="helix" evidence="14">
    <location>
        <begin position="226"/>
        <end position="236"/>
    </location>
</feature>
<feature type="helix" evidence="14">
    <location>
        <begin position="237"/>
        <end position="240"/>
    </location>
</feature>
<feature type="turn" evidence="14">
    <location>
        <begin position="242"/>
        <end position="246"/>
    </location>
</feature>
<feature type="helix" evidence="14">
    <location>
        <begin position="248"/>
        <end position="251"/>
    </location>
</feature>
<feature type="helix" evidence="14">
    <location>
        <begin position="253"/>
        <end position="266"/>
    </location>
</feature>
<feature type="helix" evidence="14">
    <location>
        <begin position="267"/>
        <end position="270"/>
    </location>
</feature>
<feature type="helix" evidence="14">
    <location>
        <begin position="271"/>
        <end position="278"/>
    </location>
</feature>
<feature type="helix" evidence="14">
    <location>
        <begin position="280"/>
        <end position="299"/>
    </location>
</feature>
<feature type="helix" evidence="14">
    <location>
        <begin position="305"/>
        <end position="335"/>
    </location>
</feature>
<feature type="turn" evidence="14">
    <location>
        <begin position="339"/>
        <end position="341"/>
    </location>
</feature>
<feature type="helix" evidence="14">
    <location>
        <begin position="342"/>
        <end position="371"/>
    </location>
</feature>
<feature type="helix" evidence="14">
    <location>
        <begin position="380"/>
        <end position="402"/>
    </location>
</feature>
<comment type="function">
    <text evidence="2 3 4 6 8">Broad-specificity transporter of purine and pyrimidine nucleosides (PubMed:11466294, PubMed:15513740, PubMed:15678184, PubMed:3311747, PubMed:374403). Can transport adenosine, uridine, thymidine, cytidine, deoxycytidine, guanosine and inosine (PubMed:11466294, PubMed:15513740, PubMed:15678184, PubMed:3311747, PubMed:374403). Can also transport xanthosine, but with a very low affinity (PubMed:11466294). Transport is driven by a proton motive force (PubMed:15513740, PubMed:374403).</text>
</comment>
<comment type="catalytic activity">
    <reaction evidence="3 8">
        <text>adenosine(in) + H(+)(in) = adenosine(out) + H(+)(out)</text>
        <dbReference type="Rhea" id="RHEA:29987"/>
        <dbReference type="ChEBI" id="CHEBI:15378"/>
        <dbReference type="ChEBI" id="CHEBI:16335"/>
    </reaction>
</comment>
<comment type="catalytic activity">
    <reaction evidence="3 8">
        <text>uridine(in) + H(+)(in) = uridine(out) + H(+)(out)</text>
        <dbReference type="Rhea" id="RHEA:29951"/>
        <dbReference type="ChEBI" id="CHEBI:15378"/>
        <dbReference type="ChEBI" id="CHEBI:16704"/>
    </reaction>
</comment>
<comment type="catalytic activity">
    <reaction evidence="3 8">
        <text>thymidine(in) + H(+)(in) = thymidine(out) + H(+)(out)</text>
        <dbReference type="Rhea" id="RHEA:29955"/>
        <dbReference type="ChEBI" id="CHEBI:15378"/>
        <dbReference type="ChEBI" id="CHEBI:17748"/>
    </reaction>
</comment>
<comment type="catalytic activity">
    <reaction evidence="3 8">
        <text>cytidine(in) + H(+)(in) = cytidine(out) + H(+)(out)</text>
        <dbReference type="Rhea" id="RHEA:29983"/>
        <dbReference type="ChEBI" id="CHEBI:15378"/>
        <dbReference type="ChEBI" id="CHEBI:17562"/>
    </reaction>
</comment>
<comment type="catalytic activity">
    <reaction evidence="8">
        <text>2'-deoxycytidine(in) + H(+)(in) = 2'-deoxycytidine(out) + H(+)(out)</text>
        <dbReference type="Rhea" id="RHEA:29975"/>
        <dbReference type="ChEBI" id="CHEBI:15378"/>
        <dbReference type="ChEBI" id="CHEBI:15698"/>
    </reaction>
</comment>
<comment type="catalytic activity">
    <reaction evidence="3 8">
        <text>guanosine(in) + H(+)(in) = guanosine(out) + H(+)(out)</text>
        <dbReference type="Rhea" id="RHEA:70915"/>
        <dbReference type="ChEBI" id="CHEBI:15378"/>
        <dbReference type="ChEBI" id="CHEBI:16750"/>
    </reaction>
</comment>
<comment type="catalytic activity">
    <reaction evidence="3">
        <text>inosine(in) + H(+)(in) = inosine(out) + H(+)(out)</text>
        <dbReference type="Rhea" id="RHEA:29963"/>
        <dbReference type="ChEBI" id="CHEBI:15378"/>
        <dbReference type="ChEBI" id="CHEBI:17596"/>
    </reaction>
</comment>
<comment type="activity regulation">
    <text evidence="3 8">Inhibited by the protonophore uncouplers 2,4-dinitrophenol and carbonyl cyanide m-chlorophenylhydrazone (CCCP), and by valinomycin (PubMed:15513740, PubMed:374403). Inhibited by the nucleoside antibiotic showdomycin (PubMed:374403).</text>
</comment>
<comment type="biophysicochemical properties">
    <kinetics>
        <KM evidence="3">23.6 uM for uridine</KM>
        <KM evidence="3">20.6 uM for adenosine</KM>
        <Vmax evidence="3">67.2 nmol/min/mg enzyme with uridine as substrate</Vmax>
        <Vmax evidence="3">56.8 nmol/min/mg enzyme with adenosine as substrate</Vmax>
    </kinetics>
</comment>
<comment type="subcellular location">
    <subcellularLocation>
        <location evidence="1 3 5 6 7">Cell inner membrane</location>
        <topology evidence="1 7">Multi-pass membrane protein</topology>
    </subcellularLocation>
</comment>
<comment type="induction">
    <text evidence="11">Transcriptionally regulated by CytR and DeoR.</text>
</comment>
<comment type="miscellaneous">
    <text evidence="4">Binding of nucleosides to NupG requires the presence of hydroxyl groups at each of the C-3' and C-5' positions of ribose.</text>
</comment>
<comment type="similarity">
    <text evidence="1 10">Belongs to the major facilitator superfamily. Nucleoside:H(+) symporter (NHS) (TC 2.A.1.10) family.</text>
</comment>
<comment type="sequence caution" evidence="10">
    <conflict type="erroneous initiation">
        <sequence resource="EMBL-CDS" id="AAA69132"/>
    </conflict>
    <text>Extended N-terminus.</text>
</comment>